<protein>
    <recommendedName>
        <fullName>U6 snRNA-associated Sm-like protein LSm6</fullName>
    </recommendedName>
</protein>
<gene>
    <name type="primary">LSM6</name>
    <name type="ORF">LELG_00042</name>
</gene>
<name>LSM6_LODEL</name>
<feature type="chain" id="PRO_0000333599" description="U6 snRNA-associated Sm-like protein LSm6">
    <location>
        <begin position="1"/>
        <end position="80"/>
    </location>
</feature>
<feature type="domain" description="Sm" evidence="2">
    <location>
        <begin position="11"/>
        <end position="80"/>
    </location>
</feature>
<dbReference type="EMBL" id="CH981524">
    <property type="protein sequence ID" value="EDK41864.1"/>
    <property type="status" value="ALT_SEQ"/>
    <property type="molecule type" value="Genomic_DNA"/>
</dbReference>
<dbReference type="RefSeq" id="XP_001527522.1">
    <property type="nucleotide sequence ID" value="XM_001527472.1"/>
</dbReference>
<dbReference type="SMR" id="A5DRQ6"/>
<dbReference type="FunCoup" id="A5DRQ6">
    <property type="interactions" value="791"/>
</dbReference>
<dbReference type="STRING" id="379508.A5DRQ6"/>
<dbReference type="GeneID" id="5235585"/>
<dbReference type="KEGG" id="lel:PVL30_000042"/>
<dbReference type="eggNOG" id="KOG1783">
    <property type="taxonomic scope" value="Eukaryota"/>
</dbReference>
<dbReference type="HOGENOM" id="CLU_076902_7_4_1"/>
<dbReference type="InParanoid" id="A5DRQ6"/>
<dbReference type="OrthoDB" id="268799at2759"/>
<dbReference type="Proteomes" id="UP000001996">
    <property type="component" value="Unassembled WGS sequence"/>
</dbReference>
<dbReference type="GO" id="GO:0005730">
    <property type="term" value="C:nucleolus"/>
    <property type="evidence" value="ECO:0007669"/>
    <property type="project" value="TreeGrafter"/>
</dbReference>
<dbReference type="GO" id="GO:0000932">
    <property type="term" value="C:P-body"/>
    <property type="evidence" value="ECO:0007669"/>
    <property type="project" value="TreeGrafter"/>
</dbReference>
<dbReference type="GO" id="GO:0005732">
    <property type="term" value="C:sno(s)RNA-containing ribonucleoprotein complex"/>
    <property type="evidence" value="ECO:0007669"/>
    <property type="project" value="TreeGrafter"/>
</dbReference>
<dbReference type="GO" id="GO:0005681">
    <property type="term" value="C:spliceosomal complex"/>
    <property type="evidence" value="ECO:0007669"/>
    <property type="project" value="UniProtKB-KW"/>
</dbReference>
<dbReference type="GO" id="GO:0046540">
    <property type="term" value="C:U4/U6 x U5 tri-snRNP complex"/>
    <property type="evidence" value="ECO:0007669"/>
    <property type="project" value="TreeGrafter"/>
</dbReference>
<dbReference type="GO" id="GO:0005688">
    <property type="term" value="C:U6 snRNP"/>
    <property type="evidence" value="ECO:0007669"/>
    <property type="project" value="TreeGrafter"/>
</dbReference>
<dbReference type="GO" id="GO:0003723">
    <property type="term" value="F:RNA binding"/>
    <property type="evidence" value="ECO:0007669"/>
    <property type="project" value="UniProtKB-KW"/>
</dbReference>
<dbReference type="GO" id="GO:0030490">
    <property type="term" value="P:maturation of SSU-rRNA"/>
    <property type="evidence" value="ECO:0007669"/>
    <property type="project" value="TreeGrafter"/>
</dbReference>
<dbReference type="GO" id="GO:0000398">
    <property type="term" value="P:mRNA splicing, via spliceosome"/>
    <property type="evidence" value="ECO:0007669"/>
    <property type="project" value="InterPro"/>
</dbReference>
<dbReference type="GO" id="GO:0008033">
    <property type="term" value="P:tRNA processing"/>
    <property type="evidence" value="ECO:0007669"/>
    <property type="project" value="UniProtKB-KW"/>
</dbReference>
<dbReference type="CDD" id="cd01726">
    <property type="entry name" value="LSm6"/>
    <property type="match status" value="1"/>
</dbReference>
<dbReference type="FunFam" id="2.30.30.100:FF:000037">
    <property type="entry name" value="U6 snRNA-associated Sm-like protein LSm6"/>
    <property type="match status" value="1"/>
</dbReference>
<dbReference type="Gene3D" id="2.30.30.100">
    <property type="match status" value="1"/>
</dbReference>
<dbReference type="InterPro" id="IPR016487">
    <property type="entry name" value="Lsm6/sSmF"/>
</dbReference>
<dbReference type="InterPro" id="IPR010920">
    <property type="entry name" value="LSM_dom_sf"/>
</dbReference>
<dbReference type="InterPro" id="IPR047575">
    <property type="entry name" value="Sm"/>
</dbReference>
<dbReference type="InterPro" id="IPR001163">
    <property type="entry name" value="Sm_dom_euk/arc"/>
</dbReference>
<dbReference type="PANTHER" id="PTHR11021">
    <property type="entry name" value="SMALL NUCLEAR RIBONUCLEOPROTEIN F SNRNP-F"/>
    <property type="match status" value="1"/>
</dbReference>
<dbReference type="PANTHER" id="PTHR11021:SF1">
    <property type="entry name" value="U6 SNRNA-ASSOCIATED SM-LIKE PROTEIN LSM6"/>
    <property type="match status" value="1"/>
</dbReference>
<dbReference type="Pfam" id="PF01423">
    <property type="entry name" value="LSM"/>
    <property type="match status" value="1"/>
</dbReference>
<dbReference type="PIRSF" id="PIRSF006609">
    <property type="entry name" value="snRNP_SmF"/>
    <property type="match status" value="1"/>
</dbReference>
<dbReference type="SMART" id="SM00651">
    <property type="entry name" value="Sm"/>
    <property type="match status" value="1"/>
</dbReference>
<dbReference type="SUPFAM" id="SSF50182">
    <property type="entry name" value="Sm-like ribonucleoproteins"/>
    <property type="match status" value="1"/>
</dbReference>
<dbReference type="PROSITE" id="PS52002">
    <property type="entry name" value="SM"/>
    <property type="match status" value="1"/>
</dbReference>
<reference key="1">
    <citation type="journal article" date="2009" name="Nature">
        <title>Evolution of pathogenicity and sexual reproduction in eight Candida genomes.</title>
        <authorList>
            <person name="Butler G."/>
            <person name="Rasmussen M.D."/>
            <person name="Lin M.F."/>
            <person name="Santos M.A.S."/>
            <person name="Sakthikumar S."/>
            <person name="Munro C.A."/>
            <person name="Rheinbay E."/>
            <person name="Grabherr M."/>
            <person name="Forche A."/>
            <person name="Reedy J.L."/>
            <person name="Agrafioti I."/>
            <person name="Arnaud M.B."/>
            <person name="Bates S."/>
            <person name="Brown A.J.P."/>
            <person name="Brunke S."/>
            <person name="Costanzo M.C."/>
            <person name="Fitzpatrick D.A."/>
            <person name="de Groot P.W.J."/>
            <person name="Harris D."/>
            <person name="Hoyer L.L."/>
            <person name="Hube B."/>
            <person name="Klis F.M."/>
            <person name="Kodira C."/>
            <person name="Lennard N."/>
            <person name="Logue M.E."/>
            <person name="Martin R."/>
            <person name="Neiman A.M."/>
            <person name="Nikolaou E."/>
            <person name="Quail M.A."/>
            <person name="Quinn J."/>
            <person name="Santos M.C."/>
            <person name="Schmitzberger F.F."/>
            <person name="Sherlock G."/>
            <person name="Shah P."/>
            <person name="Silverstein K.A.T."/>
            <person name="Skrzypek M.S."/>
            <person name="Soll D."/>
            <person name="Staggs R."/>
            <person name="Stansfield I."/>
            <person name="Stumpf M.P.H."/>
            <person name="Sudbery P.E."/>
            <person name="Srikantha T."/>
            <person name="Zeng Q."/>
            <person name="Berman J."/>
            <person name="Berriman M."/>
            <person name="Heitman J."/>
            <person name="Gow N.A.R."/>
            <person name="Lorenz M.C."/>
            <person name="Birren B.W."/>
            <person name="Kellis M."/>
            <person name="Cuomo C.A."/>
        </authorList>
    </citation>
    <scope>NUCLEOTIDE SEQUENCE [LARGE SCALE GENOMIC DNA]</scope>
    <source>
        <strain>ATCC 11503 / BCRC 21390 / CBS 2605 / JCM 1781 / NBRC 1676 / NRRL YB-4239</strain>
    </source>
</reference>
<comment type="function">
    <text evidence="1">Component of LSm protein complexes, which are involved in RNA processing and may function in a chaperone-like manner, facilitating the efficient association of RNA processing factors with their substrates. Component of the cytoplasmic LSM1-LSM7 complex, which is thought to be involved in mRNA degradation by activating the decapping step in the 5'-to-3' mRNA decay pathway. Component of the nuclear LSM2-LSM8 complex, which is involved in splicing of nuclear mRNAs. LSM2-LSM8 associates with multiple snRNP complexes containing the U6 snRNA (U4/U6 di-snRNP, spliceosomal U4/U6.U5 tri-snRNP, and free U6 snRNP). It binds directly to the 3'-terminal U-tract of U6 snRNA and plays a role in the biogenesis and stability of the U6 snRNP and U4/U6 snRNP complexes. LSM2-LSM8 probably also is involved degradation of nuclear pre-mRNA by targeting them for decapping, and in processing of pre-tRNAs, pre-rRNAs and U3 snoRNA (By similarity).</text>
</comment>
<comment type="subunit">
    <text evidence="1">Component of the heptameric LSM1-LSM7 complex, which consists of LSM1, LSM2, LSM3, LSM4, LSM5, LSM6 and LSM7. Component of the heptameric LSM2-LSM8 complex, which consists of LSM2, LSM3, LSM4, LSM5, LSM6, LSM7 and LSM8. The LSm subunits form a seven-membered ring structure with a doughnut shape (By similarity).</text>
</comment>
<comment type="subcellular location">
    <subcellularLocation>
        <location evidence="1">Cytoplasm</location>
    </subcellularLocation>
    <subcellularLocation>
        <location evidence="1">Nucleus</location>
    </subcellularLocation>
</comment>
<comment type="similarity">
    <text evidence="3">Belongs to the snRNP Sm proteins family. SmF/LSm6 subfamily.</text>
</comment>
<comment type="sequence caution" evidence="3">
    <conflict type="erroneous gene model prediction">
        <sequence resource="EMBL-CDS" id="EDK41864"/>
    </conflict>
</comment>
<keyword id="KW-0963">Cytoplasm</keyword>
<keyword id="KW-0507">mRNA processing</keyword>
<keyword id="KW-0508">mRNA splicing</keyword>
<keyword id="KW-0539">Nucleus</keyword>
<keyword id="KW-1185">Reference proteome</keyword>
<keyword id="KW-0687">Ribonucleoprotein</keyword>
<keyword id="KW-0694">RNA-binding</keyword>
<keyword id="KW-0698">rRNA processing</keyword>
<keyword id="KW-0747">Spliceosome</keyword>
<keyword id="KW-0819">tRNA processing</keyword>
<accession>A5DRQ6</accession>
<sequence>MSEAESLDRIDPSKFLGGIIGSSVKVKLHNGVEYQGDLQTIDGYMNVALENGKEVIDNKVTKHYGDVFLRGNNVLYISEN</sequence>
<organism>
    <name type="scientific">Lodderomyces elongisporus (strain ATCC 11503 / CBS 2605 / JCM 1781 / NBRC 1676 / NRRL YB-4239)</name>
    <name type="common">Yeast</name>
    <name type="synonym">Saccharomyces elongisporus</name>
    <dbReference type="NCBI Taxonomy" id="379508"/>
    <lineage>
        <taxon>Eukaryota</taxon>
        <taxon>Fungi</taxon>
        <taxon>Dikarya</taxon>
        <taxon>Ascomycota</taxon>
        <taxon>Saccharomycotina</taxon>
        <taxon>Pichiomycetes</taxon>
        <taxon>Debaryomycetaceae</taxon>
        <taxon>Candida/Lodderomyces clade</taxon>
        <taxon>Lodderomyces</taxon>
    </lineage>
</organism>
<evidence type="ECO:0000250" key="1"/>
<evidence type="ECO:0000255" key="2">
    <source>
        <dbReference type="PROSITE-ProRule" id="PRU01346"/>
    </source>
</evidence>
<evidence type="ECO:0000305" key="3"/>
<proteinExistence type="inferred from homology"/>